<sequence length="494" mass="54905">MAKTLSAAQANKEHVLAVSRDFISQPRLTYKTVSGVNGPLVILDEVKFPKFSEIVQLKLADGTHRSGQVLEVSGSKAVVQVFEGTSGIDAKNTLCEFTGDILRTPVSEDMLGRVFNGSGKPIDKGPPILAEDFLDIQGQPINPWSRIYPEEMIQTGISAIDVMNSIARGQKIPIFSAAGLPHNEIAAQICRQAGLVKIPGKSVLDDHEDNFAIVFAAMGVNMETARFFKQDFEENGSMENVCLFLNLANDPTIERIITPRLALTAAEFLAYQCEKHVLVILTDMSSYAEALREVSAAREEVPGRRGFPGYMYTDLATIYERAGRVEGRNGSITQIPILTMPNDDITHPIPDLTGYITEGQIYVDRQLHNRQIYPPVNVLPSLSRLMKSAIGEGMTRKDHSDVSNQLYACYAIGKDVQAMKAVVGEEALTPDDLLYLEFLTKFEKNFITQGNYENRTVFESLDIGWQLLRIFPKEMLKRIPASILAEFYPRDSRH</sequence>
<accession>P31401</accession>
<keyword id="KW-0067">ATP-binding</keyword>
<keyword id="KW-0375">Hydrogen ion transport</keyword>
<keyword id="KW-0406">Ion transport</keyword>
<keyword id="KW-0547">Nucleotide-binding</keyword>
<keyword id="KW-0813">Transport</keyword>
<protein>
    <recommendedName>
        <fullName>V-type proton ATPase subunit B</fullName>
        <shortName>V-ATPase subunit B</shortName>
    </recommendedName>
    <alternativeName>
        <fullName>Vacuolar proton pump subunit B</fullName>
    </alternativeName>
</protein>
<reference key="1">
    <citation type="journal article" date="1992" name="Biochim. Biophys. Acta">
        <title>Primary structure of V-ATPase subunit B from Manduca sexta midgut.</title>
        <authorList>
            <person name="Novak F.J."/>
            <person name="Graf R."/>
            <person name="Waring R.B."/>
            <person name="Wolfersberger M.G."/>
            <person name="Wieczorek H."/>
            <person name="Harvey W.R."/>
        </authorList>
    </citation>
    <scope>NUCLEOTIDE SEQUENCE [MRNA]</scope>
    <source>
        <tissue>Midgut</tissue>
    </source>
</reference>
<gene>
    <name type="primary">VHA55</name>
</gene>
<dbReference type="EMBL" id="X64354">
    <property type="protein sequence ID" value="CAA45706.1"/>
    <property type="molecule type" value="mRNA"/>
</dbReference>
<dbReference type="PIR" id="S24387">
    <property type="entry name" value="S24387"/>
</dbReference>
<dbReference type="SMR" id="P31401"/>
<dbReference type="DIP" id="DIP-61387N"/>
<dbReference type="IntAct" id="P31401">
    <property type="interactions" value="1"/>
</dbReference>
<dbReference type="ChEMBL" id="CHEMBL1781869"/>
<dbReference type="EnsemblMetazoa" id="XM_037439990.1">
    <property type="protein sequence ID" value="XP_037295887.1"/>
    <property type="gene ID" value="LOC115452104"/>
</dbReference>
<dbReference type="OrthoDB" id="1735853at2759"/>
<dbReference type="GO" id="GO:0033180">
    <property type="term" value="C:proton-transporting V-type ATPase, V1 domain"/>
    <property type="evidence" value="ECO:0007669"/>
    <property type="project" value="InterPro"/>
</dbReference>
<dbReference type="GO" id="GO:0005524">
    <property type="term" value="F:ATP binding"/>
    <property type="evidence" value="ECO:0007669"/>
    <property type="project" value="UniProtKB-KW"/>
</dbReference>
<dbReference type="GO" id="GO:0046961">
    <property type="term" value="F:proton-transporting ATPase activity, rotational mechanism"/>
    <property type="evidence" value="ECO:0007669"/>
    <property type="project" value="InterPro"/>
</dbReference>
<dbReference type="GO" id="GO:0046034">
    <property type="term" value="P:ATP metabolic process"/>
    <property type="evidence" value="ECO:0007669"/>
    <property type="project" value="InterPro"/>
</dbReference>
<dbReference type="GO" id="GO:0007035">
    <property type="term" value="P:vacuolar acidification"/>
    <property type="evidence" value="ECO:0007669"/>
    <property type="project" value="TreeGrafter"/>
</dbReference>
<dbReference type="CDD" id="cd18112">
    <property type="entry name" value="ATP-synt_V_A-type_beta_C"/>
    <property type="match status" value="1"/>
</dbReference>
<dbReference type="CDD" id="cd18118">
    <property type="entry name" value="ATP-synt_V_A-type_beta_N"/>
    <property type="match status" value="1"/>
</dbReference>
<dbReference type="CDD" id="cd01135">
    <property type="entry name" value="V_A-ATPase_B"/>
    <property type="match status" value="1"/>
</dbReference>
<dbReference type="FunFam" id="3.40.50.12240:FF:000001">
    <property type="entry name" value="V-type proton ATPase subunit B, brain"/>
    <property type="match status" value="1"/>
</dbReference>
<dbReference type="Gene3D" id="3.40.50.12240">
    <property type="match status" value="1"/>
</dbReference>
<dbReference type="HAMAP" id="MF_00310">
    <property type="entry name" value="ATP_synth_B_arch"/>
    <property type="match status" value="1"/>
</dbReference>
<dbReference type="InterPro" id="IPR055190">
    <property type="entry name" value="ATP-synt_VA_C"/>
</dbReference>
<dbReference type="InterPro" id="IPR020003">
    <property type="entry name" value="ATPase_a/bsu_AS"/>
</dbReference>
<dbReference type="InterPro" id="IPR004100">
    <property type="entry name" value="ATPase_F1/V1/A1_a/bsu_N"/>
</dbReference>
<dbReference type="InterPro" id="IPR000194">
    <property type="entry name" value="ATPase_F1/V1/A1_a/bsu_nucl-bd"/>
</dbReference>
<dbReference type="InterPro" id="IPR005723">
    <property type="entry name" value="ATPase_V1-cplx_bsu"/>
</dbReference>
<dbReference type="InterPro" id="IPR027417">
    <property type="entry name" value="P-loop_NTPase"/>
</dbReference>
<dbReference type="InterPro" id="IPR022879">
    <property type="entry name" value="V-ATPase_su_B/beta"/>
</dbReference>
<dbReference type="NCBIfam" id="NF003235">
    <property type="entry name" value="PRK04196.1"/>
    <property type="match status" value="1"/>
</dbReference>
<dbReference type="NCBIfam" id="TIGR01040">
    <property type="entry name" value="V-ATPase_V1_B"/>
    <property type="match status" value="1"/>
</dbReference>
<dbReference type="PANTHER" id="PTHR43389">
    <property type="entry name" value="V-TYPE PROTON ATPASE SUBUNIT B"/>
    <property type="match status" value="1"/>
</dbReference>
<dbReference type="PANTHER" id="PTHR43389:SF4">
    <property type="entry name" value="V-TYPE PROTON ATPASE SUBUNIT B"/>
    <property type="match status" value="1"/>
</dbReference>
<dbReference type="Pfam" id="PF00006">
    <property type="entry name" value="ATP-synt_ab"/>
    <property type="match status" value="1"/>
</dbReference>
<dbReference type="Pfam" id="PF02874">
    <property type="entry name" value="ATP-synt_ab_N"/>
    <property type="match status" value="1"/>
</dbReference>
<dbReference type="Pfam" id="PF22919">
    <property type="entry name" value="ATP-synt_VA_C"/>
    <property type="match status" value="1"/>
</dbReference>
<dbReference type="PIRSF" id="PIRSF039114">
    <property type="entry name" value="V-ATPsynth_beta/V-ATPase_B"/>
    <property type="match status" value="1"/>
</dbReference>
<dbReference type="SUPFAM" id="SSF52540">
    <property type="entry name" value="P-loop containing nucleoside triphosphate hydrolases"/>
    <property type="match status" value="1"/>
</dbReference>
<dbReference type="PROSITE" id="PS00152">
    <property type="entry name" value="ATPASE_ALPHA_BETA"/>
    <property type="match status" value="1"/>
</dbReference>
<name>VATB_MANSE</name>
<comment type="function">
    <text evidence="1">Non-catalytic subunit of the V1 complex of vacuolar(H+)-ATPase (V-ATPase), a multisubunit enzyme composed of a peripheral complex (V1) that hydrolyzes ATP and a membrane integral complex (V0) that translocates protons (By similarity). V-ATPase is responsible for acidifying and maintaining the pH of intracellular compartments and in some cell types, is targeted to the plasma membrane, where it is responsible for acidifying the extracellular environment (By similarity). Essential for the proper assembly and activity of V-ATPase (By similarity).</text>
</comment>
<comment type="subunit">
    <text evidence="2">V-ATPase is a heteromultimeric enzyme made up of two complexes: the ATP-hydrolytic V1 complex and the proton translocation V0 complex (By similarity). The V1 complex consists of three catalytic AB heterodimers that form a heterohexamer, three peripheral stalks each consisting of EG heterodimers, one central rotor including subunits D and F, and the regulatory subunits C and H (By similarity). The proton translocation complex V0 consists of the proton transport subunit a, a ring of proteolipid subunits c9c'', rotary subunit d, subunits e and f, and the accessory subunits VhaAC45 and ATP6AP2 (By similarity).</text>
</comment>
<comment type="similarity">
    <text evidence="3">Belongs to the ATPase alpha/beta chains family.</text>
</comment>
<organism>
    <name type="scientific">Manduca sexta</name>
    <name type="common">Tobacco hawkmoth</name>
    <name type="synonym">Tobacco hornworm</name>
    <dbReference type="NCBI Taxonomy" id="7130"/>
    <lineage>
        <taxon>Eukaryota</taxon>
        <taxon>Metazoa</taxon>
        <taxon>Ecdysozoa</taxon>
        <taxon>Arthropoda</taxon>
        <taxon>Hexapoda</taxon>
        <taxon>Insecta</taxon>
        <taxon>Pterygota</taxon>
        <taxon>Neoptera</taxon>
        <taxon>Endopterygota</taxon>
        <taxon>Lepidoptera</taxon>
        <taxon>Glossata</taxon>
        <taxon>Ditrysia</taxon>
        <taxon>Bombycoidea</taxon>
        <taxon>Sphingidae</taxon>
        <taxon>Sphinginae</taxon>
        <taxon>Sphingini</taxon>
        <taxon>Manduca</taxon>
    </lineage>
</organism>
<proteinExistence type="evidence at transcript level"/>
<feature type="chain" id="PRO_0000144634" description="V-type proton ATPase subunit B">
    <location>
        <begin position="1"/>
        <end position="494"/>
    </location>
</feature>
<feature type="binding site" evidence="2">
    <location>
        <position position="384"/>
    </location>
    <ligand>
        <name>ATP</name>
        <dbReference type="ChEBI" id="CHEBI:30616"/>
    </ligand>
</feature>
<evidence type="ECO:0000250" key="1">
    <source>
        <dbReference type="UniProtKB" id="P15313"/>
    </source>
</evidence>
<evidence type="ECO:0000250" key="2">
    <source>
        <dbReference type="UniProtKB" id="P21281"/>
    </source>
</evidence>
<evidence type="ECO:0000305" key="3"/>